<gene>
    <name evidence="1" type="primary">thiI</name>
    <name type="ordered locus">BCE33L4391</name>
</gene>
<keyword id="KW-0067">ATP-binding</keyword>
<keyword id="KW-0963">Cytoplasm</keyword>
<keyword id="KW-0547">Nucleotide-binding</keyword>
<keyword id="KW-0694">RNA-binding</keyword>
<keyword id="KW-0784">Thiamine biosynthesis</keyword>
<keyword id="KW-0808">Transferase</keyword>
<keyword id="KW-0820">tRNA-binding</keyword>
<protein>
    <recommendedName>
        <fullName evidence="1">Probable tRNA sulfurtransferase</fullName>
        <ecNumber evidence="1">2.8.1.4</ecNumber>
    </recommendedName>
    <alternativeName>
        <fullName evidence="1">Sulfur carrier protein ThiS sulfurtransferase</fullName>
    </alternativeName>
    <alternativeName>
        <fullName evidence="1">Thiamine biosynthesis protein ThiI</fullName>
    </alternativeName>
    <alternativeName>
        <fullName evidence="1">tRNA 4-thiouridine synthase</fullName>
    </alternativeName>
</protein>
<feature type="chain" id="PRO_1000074206" description="Probable tRNA sulfurtransferase">
    <location>
        <begin position="1"/>
        <end position="404"/>
    </location>
</feature>
<feature type="domain" description="THUMP" evidence="1">
    <location>
        <begin position="61"/>
        <end position="166"/>
    </location>
</feature>
<feature type="binding site" evidence="1">
    <location>
        <begin position="184"/>
        <end position="185"/>
    </location>
    <ligand>
        <name>ATP</name>
        <dbReference type="ChEBI" id="CHEBI:30616"/>
    </ligand>
</feature>
<feature type="binding site" evidence="1">
    <location>
        <begin position="209"/>
        <end position="210"/>
    </location>
    <ligand>
        <name>ATP</name>
        <dbReference type="ChEBI" id="CHEBI:30616"/>
    </ligand>
</feature>
<feature type="binding site" evidence="1">
    <location>
        <position position="266"/>
    </location>
    <ligand>
        <name>ATP</name>
        <dbReference type="ChEBI" id="CHEBI:30616"/>
    </ligand>
</feature>
<feature type="binding site" evidence="1">
    <location>
        <position position="288"/>
    </location>
    <ligand>
        <name>ATP</name>
        <dbReference type="ChEBI" id="CHEBI:30616"/>
    </ligand>
</feature>
<feature type="binding site" evidence="1">
    <location>
        <position position="297"/>
    </location>
    <ligand>
        <name>ATP</name>
        <dbReference type="ChEBI" id="CHEBI:30616"/>
    </ligand>
</feature>
<reference key="1">
    <citation type="journal article" date="2006" name="J. Bacteriol.">
        <title>Pathogenomic sequence analysis of Bacillus cereus and Bacillus thuringiensis isolates closely related to Bacillus anthracis.</title>
        <authorList>
            <person name="Han C.S."/>
            <person name="Xie G."/>
            <person name="Challacombe J.F."/>
            <person name="Altherr M.R."/>
            <person name="Bhotika S.S."/>
            <person name="Bruce D."/>
            <person name="Campbell C.S."/>
            <person name="Campbell M.L."/>
            <person name="Chen J."/>
            <person name="Chertkov O."/>
            <person name="Cleland C."/>
            <person name="Dimitrijevic M."/>
            <person name="Doggett N.A."/>
            <person name="Fawcett J.J."/>
            <person name="Glavina T."/>
            <person name="Goodwin L.A."/>
            <person name="Hill K.K."/>
            <person name="Hitchcock P."/>
            <person name="Jackson P.J."/>
            <person name="Keim P."/>
            <person name="Kewalramani A.R."/>
            <person name="Longmire J."/>
            <person name="Lucas S."/>
            <person name="Malfatti S."/>
            <person name="McMurry K."/>
            <person name="Meincke L.J."/>
            <person name="Misra M."/>
            <person name="Moseman B.L."/>
            <person name="Mundt M."/>
            <person name="Munk A.C."/>
            <person name="Okinaka R.T."/>
            <person name="Parson-Quintana B."/>
            <person name="Reilly L.P."/>
            <person name="Richardson P."/>
            <person name="Robinson D.L."/>
            <person name="Rubin E."/>
            <person name="Saunders E."/>
            <person name="Tapia R."/>
            <person name="Tesmer J.G."/>
            <person name="Thayer N."/>
            <person name="Thompson L.S."/>
            <person name="Tice H."/>
            <person name="Ticknor L.O."/>
            <person name="Wills P.L."/>
            <person name="Brettin T.S."/>
            <person name="Gilna P."/>
        </authorList>
    </citation>
    <scope>NUCLEOTIDE SEQUENCE [LARGE SCALE GENOMIC DNA]</scope>
    <source>
        <strain>ZK / E33L</strain>
    </source>
</reference>
<dbReference type="EC" id="2.8.1.4" evidence="1"/>
<dbReference type="EMBL" id="CP000001">
    <property type="protein sequence ID" value="AAU15879.1"/>
    <property type="molecule type" value="Genomic_DNA"/>
</dbReference>
<dbReference type="RefSeq" id="WP_000989288.1">
    <property type="nucleotide sequence ID" value="NZ_CP009968.1"/>
</dbReference>
<dbReference type="SMR" id="Q633E8"/>
<dbReference type="GeneID" id="93006459"/>
<dbReference type="KEGG" id="bcz:BCE33L4391"/>
<dbReference type="PATRIC" id="fig|288681.22.peg.980"/>
<dbReference type="UniPathway" id="UPA00060"/>
<dbReference type="Proteomes" id="UP000002612">
    <property type="component" value="Chromosome"/>
</dbReference>
<dbReference type="GO" id="GO:0005829">
    <property type="term" value="C:cytosol"/>
    <property type="evidence" value="ECO:0007669"/>
    <property type="project" value="TreeGrafter"/>
</dbReference>
<dbReference type="GO" id="GO:0005524">
    <property type="term" value="F:ATP binding"/>
    <property type="evidence" value="ECO:0007669"/>
    <property type="project" value="UniProtKB-UniRule"/>
</dbReference>
<dbReference type="GO" id="GO:0004810">
    <property type="term" value="F:CCA tRNA nucleotidyltransferase activity"/>
    <property type="evidence" value="ECO:0007669"/>
    <property type="project" value="InterPro"/>
</dbReference>
<dbReference type="GO" id="GO:0000049">
    <property type="term" value="F:tRNA binding"/>
    <property type="evidence" value="ECO:0007669"/>
    <property type="project" value="UniProtKB-UniRule"/>
</dbReference>
<dbReference type="GO" id="GO:0140741">
    <property type="term" value="F:tRNA-uracil-4 sulfurtransferase activity"/>
    <property type="evidence" value="ECO:0007669"/>
    <property type="project" value="UniProtKB-EC"/>
</dbReference>
<dbReference type="GO" id="GO:0009228">
    <property type="term" value="P:thiamine biosynthetic process"/>
    <property type="evidence" value="ECO:0007669"/>
    <property type="project" value="UniProtKB-KW"/>
</dbReference>
<dbReference type="GO" id="GO:0009229">
    <property type="term" value="P:thiamine diphosphate biosynthetic process"/>
    <property type="evidence" value="ECO:0007669"/>
    <property type="project" value="UniProtKB-UniRule"/>
</dbReference>
<dbReference type="GO" id="GO:0052837">
    <property type="term" value="P:thiazole biosynthetic process"/>
    <property type="evidence" value="ECO:0007669"/>
    <property type="project" value="TreeGrafter"/>
</dbReference>
<dbReference type="GO" id="GO:0002937">
    <property type="term" value="P:tRNA 4-thiouridine biosynthesis"/>
    <property type="evidence" value="ECO:0007669"/>
    <property type="project" value="TreeGrafter"/>
</dbReference>
<dbReference type="CDD" id="cd01712">
    <property type="entry name" value="PPase_ThiI"/>
    <property type="match status" value="1"/>
</dbReference>
<dbReference type="CDD" id="cd11716">
    <property type="entry name" value="THUMP_ThiI"/>
    <property type="match status" value="1"/>
</dbReference>
<dbReference type="FunFam" id="3.30.2130.30:FF:000003">
    <property type="entry name" value="Probable tRNA sulfurtransferase"/>
    <property type="match status" value="1"/>
</dbReference>
<dbReference type="FunFam" id="3.40.50.620:FF:000053">
    <property type="entry name" value="Probable tRNA sulfurtransferase"/>
    <property type="match status" value="1"/>
</dbReference>
<dbReference type="Gene3D" id="3.30.2130.30">
    <property type="match status" value="1"/>
</dbReference>
<dbReference type="Gene3D" id="3.40.50.620">
    <property type="entry name" value="HUPs"/>
    <property type="match status" value="1"/>
</dbReference>
<dbReference type="HAMAP" id="MF_00021">
    <property type="entry name" value="ThiI"/>
    <property type="match status" value="1"/>
</dbReference>
<dbReference type="InterPro" id="IPR014729">
    <property type="entry name" value="Rossmann-like_a/b/a_fold"/>
</dbReference>
<dbReference type="InterPro" id="IPR020536">
    <property type="entry name" value="ThiI_AANH"/>
</dbReference>
<dbReference type="InterPro" id="IPR054173">
    <property type="entry name" value="ThiI_fer"/>
</dbReference>
<dbReference type="InterPro" id="IPR049961">
    <property type="entry name" value="ThiI_N"/>
</dbReference>
<dbReference type="InterPro" id="IPR004114">
    <property type="entry name" value="THUMP_dom"/>
</dbReference>
<dbReference type="InterPro" id="IPR049962">
    <property type="entry name" value="THUMP_ThiI"/>
</dbReference>
<dbReference type="InterPro" id="IPR003720">
    <property type="entry name" value="tRNA_STrfase"/>
</dbReference>
<dbReference type="InterPro" id="IPR050102">
    <property type="entry name" value="tRNA_sulfurtransferase_ThiI"/>
</dbReference>
<dbReference type="NCBIfam" id="TIGR00342">
    <property type="entry name" value="tRNA uracil 4-sulfurtransferase ThiI"/>
    <property type="match status" value="1"/>
</dbReference>
<dbReference type="PANTHER" id="PTHR43209">
    <property type="entry name" value="TRNA SULFURTRANSFERASE"/>
    <property type="match status" value="1"/>
</dbReference>
<dbReference type="PANTHER" id="PTHR43209:SF1">
    <property type="entry name" value="TRNA SULFURTRANSFERASE"/>
    <property type="match status" value="1"/>
</dbReference>
<dbReference type="Pfam" id="PF02568">
    <property type="entry name" value="ThiI"/>
    <property type="match status" value="1"/>
</dbReference>
<dbReference type="Pfam" id="PF22025">
    <property type="entry name" value="ThiI_fer"/>
    <property type="match status" value="1"/>
</dbReference>
<dbReference type="Pfam" id="PF02926">
    <property type="entry name" value="THUMP"/>
    <property type="match status" value="1"/>
</dbReference>
<dbReference type="SMART" id="SM00981">
    <property type="entry name" value="THUMP"/>
    <property type="match status" value="1"/>
</dbReference>
<dbReference type="SUPFAM" id="SSF52402">
    <property type="entry name" value="Adenine nucleotide alpha hydrolases-like"/>
    <property type="match status" value="1"/>
</dbReference>
<dbReference type="SUPFAM" id="SSF143437">
    <property type="entry name" value="THUMP domain-like"/>
    <property type="match status" value="1"/>
</dbReference>
<dbReference type="PROSITE" id="PS51165">
    <property type="entry name" value="THUMP"/>
    <property type="match status" value="1"/>
</dbReference>
<organism>
    <name type="scientific">Bacillus cereus (strain ZK / E33L)</name>
    <dbReference type="NCBI Taxonomy" id="288681"/>
    <lineage>
        <taxon>Bacteria</taxon>
        <taxon>Bacillati</taxon>
        <taxon>Bacillota</taxon>
        <taxon>Bacilli</taxon>
        <taxon>Bacillales</taxon>
        <taxon>Bacillaceae</taxon>
        <taxon>Bacillus</taxon>
        <taxon>Bacillus cereus group</taxon>
    </lineage>
</organism>
<sequence>MMTYEYILVRYGEMTTKGKNRSKFVSTLKDNVKFKLKKFPNIKIDATHDRMYIQLNGEDHEAVSERLKDVFGIHKFNLAMKVPSELEDIKKGALAAFLQVKGDVKTFKITVHRSYKHFPMRTMELLPEIGGHILENTEDITVDVHNPDVNVRVEIRSGYSYIMCDERMGAGGLPVGVGGKVMVLLSGGIDSPVAAYLTMKRGVSVEAVHFHSPPFTSERAKQKVIDLAQELTKYCKRVTLHLVPFTEVQKTINKEIPSSYSMTVMRRMMMRITERIAEERNALAITTGESLGQVASQTLDSMHTINEVTNYPVIRPLITMDKLEIIKIAEEIGTYEISIRPYEDCCTVFTPASPATKPKREKANRFEAKYDFTPLIDEAVANKETMVLQTVEVVAEEEKFEELF</sequence>
<comment type="function">
    <text evidence="1">Catalyzes the ATP-dependent transfer of a sulfur to tRNA to produce 4-thiouridine in position 8 of tRNAs, which functions as a near-UV photosensor. Also catalyzes the transfer of sulfur to the sulfur carrier protein ThiS, forming ThiS-thiocarboxylate. This is a step in the synthesis of thiazole, in the thiamine biosynthesis pathway. The sulfur is donated as persulfide by IscS.</text>
</comment>
<comment type="catalytic activity">
    <reaction evidence="1">
        <text>[ThiI sulfur-carrier protein]-S-sulfanyl-L-cysteine + a uridine in tRNA + 2 reduced [2Fe-2S]-[ferredoxin] + ATP + H(+) = [ThiI sulfur-carrier protein]-L-cysteine + a 4-thiouridine in tRNA + 2 oxidized [2Fe-2S]-[ferredoxin] + AMP + diphosphate</text>
        <dbReference type="Rhea" id="RHEA:24176"/>
        <dbReference type="Rhea" id="RHEA-COMP:10000"/>
        <dbReference type="Rhea" id="RHEA-COMP:10001"/>
        <dbReference type="Rhea" id="RHEA-COMP:13337"/>
        <dbReference type="Rhea" id="RHEA-COMP:13338"/>
        <dbReference type="Rhea" id="RHEA-COMP:13339"/>
        <dbReference type="Rhea" id="RHEA-COMP:13340"/>
        <dbReference type="ChEBI" id="CHEBI:15378"/>
        <dbReference type="ChEBI" id="CHEBI:29950"/>
        <dbReference type="ChEBI" id="CHEBI:30616"/>
        <dbReference type="ChEBI" id="CHEBI:33019"/>
        <dbReference type="ChEBI" id="CHEBI:33737"/>
        <dbReference type="ChEBI" id="CHEBI:33738"/>
        <dbReference type="ChEBI" id="CHEBI:61963"/>
        <dbReference type="ChEBI" id="CHEBI:65315"/>
        <dbReference type="ChEBI" id="CHEBI:136798"/>
        <dbReference type="ChEBI" id="CHEBI:456215"/>
        <dbReference type="EC" id="2.8.1.4"/>
    </reaction>
</comment>
<comment type="catalytic activity">
    <reaction evidence="1">
        <text>[ThiS sulfur-carrier protein]-C-terminal Gly-Gly-AMP + S-sulfanyl-L-cysteinyl-[cysteine desulfurase] + AH2 = [ThiS sulfur-carrier protein]-C-terminal-Gly-aminoethanethioate + L-cysteinyl-[cysteine desulfurase] + A + AMP + 2 H(+)</text>
        <dbReference type="Rhea" id="RHEA:43340"/>
        <dbReference type="Rhea" id="RHEA-COMP:12157"/>
        <dbReference type="Rhea" id="RHEA-COMP:12158"/>
        <dbReference type="Rhea" id="RHEA-COMP:12910"/>
        <dbReference type="Rhea" id="RHEA-COMP:19908"/>
        <dbReference type="ChEBI" id="CHEBI:13193"/>
        <dbReference type="ChEBI" id="CHEBI:15378"/>
        <dbReference type="ChEBI" id="CHEBI:17499"/>
        <dbReference type="ChEBI" id="CHEBI:29950"/>
        <dbReference type="ChEBI" id="CHEBI:61963"/>
        <dbReference type="ChEBI" id="CHEBI:90618"/>
        <dbReference type="ChEBI" id="CHEBI:232372"/>
        <dbReference type="ChEBI" id="CHEBI:456215"/>
    </reaction>
</comment>
<comment type="pathway">
    <text evidence="1">Cofactor biosynthesis; thiamine diphosphate biosynthesis.</text>
</comment>
<comment type="subcellular location">
    <subcellularLocation>
        <location evidence="1">Cytoplasm</location>
    </subcellularLocation>
</comment>
<comment type="similarity">
    <text evidence="1">Belongs to the ThiI family.</text>
</comment>
<evidence type="ECO:0000255" key="1">
    <source>
        <dbReference type="HAMAP-Rule" id="MF_00021"/>
    </source>
</evidence>
<accession>Q633E8</accession>
<proteinExistence type="inferred from homology"/>
<name>THII_BACCZ</name>